<evidence type="ECO:0000250" key="1">
    <source>
        <dbReference type="UniProtKB" id="P30803"/>
    </source>
</evidence>
<evidence type="ECO:0000255" key="2"/>
<evidence type="ECO:0000255" key="3">
    <source>
        <dbReference type="PROSITE-ProRule" id="PRU00099"/>
    </source>
</evidence>
<evidence type="ECO:0000255" key="4">
    <source>
        <dbReference type="PROSITE-ProRule" id="PRU00498"/>
    </source>
</evidence>
<evidence type="ECO:0000256" key="5">
    <source>
        <dbReference type="SAM" id="MobiDB-lite"/>
    </source>
</evidence>
<evidence type="ECO:0000269" key="6">
    <source>
    </source>
</evidence>
<evidence type="ECO:0000269" key="7">
    <source>
    </source>
</evidence>
<evidence type="ECO:0000269" key="8">
    <source>
    </source>
</evidence>
<evidence type="ECO:0000303" key="9">
    <source>
    </source>
</evidence>
<evidence type="ECO:0000305" key="10"/>
<evidence type="ECO:0000305" key="11">
    <source>
    </source>
</evidence>
<evidence type="ECO:0000305" key="12">
    <source>
    </source>
</evidence>
<evidence type="ECO:0000305" key="13">
    <source>
    </source>
</evidence>
<evidence type="ECO:0000312" key="14">
    <source>
        <dbReference type="EMBL" id="CAC05389.1"/>
    </source>
</evidence>
<evidence type="ECO:0000312" key="15">
    <source>
        <dbReference type="EMBL" id="CAD52725.2"/>
    </source>
</evidence>
<evidence type="ECO:0000312" key="16">
    <source>
        <dbReference type="Proteomes" id="UP000001450"/>
    </source>
</evidence>
<comment type="function">
    <text evidence="6 7 8">Catalyzes the synthesis of the second messenger cGMP from GTP (PubMed:10747978, PubMed:11703675, PubMed:18452584). Regulates cGMP production in gametocytes; however, is dispensable for the initiation of gametogenesis (PubMed:18452584). Does not have adenylate cyclase activity (PubMed:10747978).</text>
</comment>
<comment type="catalytic activity">
    <reaction evidence="6 7 13">
        <text>GTP = 3',5'-cyclic GMP + diphosphate</text>
        <dbReference type="Rhea" id="RHEA:13665"/>
        <dbReference type="ChEBI" id="CHEBI:33019"/>
        <dbReference type="ChEBI" id="CHEBI:37565"/>
        <dbReference type="ChEBI" id="CHEBI:57746"/>
        <dbReference type="EC" id="4.6.1.2"/>
    </reaction>
</comment>
<comment type="cofactor">
    <cofactor evidence="12">
        <name>Mg(2+)</name>
        <dbReference type="ChEBI" id="CHEBI:18420"/>
    </cofactor>
    <cofactor evidence="11 12">
        <name>Mn(2+)</name>
        <dbReference type="ChEBI" id="CHEBI:29035"/>
    </cofactor>
    <text evidence="1 11 12">Binds 2 magnesium ions per subunit (By similarity). Is also active with manganese (in vitro) (Probable).</text>
</comment>
<comment type="activity regulation">
    <text evidence="7">Basal guanylate activity of the recombinant guanylate cyclase domains 1 and 2 is not modulated by an increase in Ca(2+) levels or by the gametogenesis inducer xanthurenic acid.</text>
</comment>
<comment type="subcellular location">
    <subcellularLocation>
        <location evidence="2">Membrane</location>
        <topology evidence="2">Multi-pass membrane protein</topology>
    </subcellularLocation>
</comment>
<comment type="developmental stage">
    <text evidence="6">During the blood stage, specifically expressed in gametocytes.</text>
</comment>
<comment type="domain">
    <text evidence="8">The N-terminus contains a P-type ATPase-like domain which is required for guanylate cyclase activity.</text>
</comment>
<comment type="similarity">
    <text evidence="10">In the N-terminal section; belongs to the cation transport ATPase (P-type) (TC 3.A.3) family. Type IV subfamily.</text>
</comment>
<comment type="similarity">
    <text evidence="10">In the C-terminal section; belongs to the adenylyl cyclase class-4/guanylyl cyclase family.</text>
</comment>
<proteinExistence type="evidence at protein level"/>
<feature type="chain" id="PRO_0000452806" description="Guanylate cyclase beta">
    <location>
        <begin position="1"/>
        <end position="3179"/>
    </location>
</feature>
<feature type="topological domain" description="Cytoplasmic" evidence="10">
    <location>
        <begin position="1"/>
        <end position="60"/>
    </location>
</feature>
<feature type="transmembrane region" description="Helical" evidence="2">
    <location>
        <begin position="61"/>
        <end position="81"/>
    </location>
</feature>
<feature type="topological domain" description="Extracellular" evidence="10">
    <location>
        <begin position="82"/>
        <end position="88"/>
    </location>
</feature>
<feature type="transmembrane region" description="Helical" evidence="2">
    <location>
        <begin position="89"/>
        <end position="109"/>
    </location>
</feature>
<feature type="topological domain" description="Cytoplasmic" evidence="10">
    <location>
        <begin position="110"/>
        <end position="295"/>
    </location>
</feature>
<feature type="transmembrane region" description="Helical" evidence="2">
    <location>
        <begin position="296"/>
        <end position="316"/>
    </location>
</feature>
<feature type="topological domain" description="Extracellular" evidence="10">
    <location>
        <begin position="317"/>
        <end position="328"/>
    </location>
</feature>
<feature type="transmembrane region" description="Helical" evidence="2">
    <location>
        <begin position="329"/>
        <end position="349"/>
    </location>
</feature>
<feature type="topological domain" description="Cytoplasmic" evidence="10">
    <location>
        <begin position="350"/>
        <end position="988"/>
    </location>
</feature>
<feature type="transmembrane region" description="Helical" evidence="2">
    <location>
        <begin position="989"/>
        <end position="1009"/>
    </location>
</feature>
<feature type="topological domain" description="Extracellular" evidence="10">
    <location>
        <begin position="1010"/>
        <end position="1020"/>
    </location>
</feature>
<feature type="transmembrane region" description="Helical" evidence="2">
    <location>
        <begin position="1021"/>
        <end position="1041"/>
    </location>
</feature>
<feature type="topological domain" description="Cytoplasmic" evidence="10">
    <location>
        <begin position="1042"/>
        <end position="1069"/>
    </location>
</feature>
<feature type="transmembrane region" description="Helical" evidence="2">
    <location>
        <begin position="1070"/>
        <end position="1090"/>
    </location>
</feature>
<feature type="topological domain" description="Extracellular" evidence="10">
    <location>
        <begin position="1091"/>
        <end position="1102"/>
    </location>
</feature>
<feature type="transmembrane region" description="Helical" evidence="2">
    <location>
        <begin position="1103"/>
        <end position="1123"/>
    </location>
</feature>
<feature type="topological domain" description="Cytoplasmic" evidence="10">
    <location>
        <begin position="1124"/>
        <end position="1127"/>
    </location>
</feature>
<feature type="transmembrane region" description="Helical" evidence="2">
    <location>
        <begin position="1128"/>
        <end position="1148"/>
    </location>
</feature>
<feature type="topological domain" description="Extracellular" evidence="10">
    <location>
        <begin position="1149"/>
        <end position="1168"/>
    </location>
</feature>
<feature type="transmembrane region" description="Helical" evidence="2">
    <location>
        <begin position="1169"/>
        <end position="1189"/>
    </location>
</feature>
<feature type="topological domain" description="Cytoplasmic" evidence="10">
    <location>
        <begin position="1190"/>
        <end position="1304"/>
    </location>
</feature>
<feature type="transmembrane region" description="Helical" evidence="2">
    <location>
        <begin position="1305"/>
        <end position="1325"/>
    </location>
</feature>
<feature type="topological domain" description="Extracellular" evidence="10">
    <location>
        <begin position="1326"/>
        <end position="1331"/>
    </location>
</feature>
<feature type="transmembrane region" description="Helical" evidence="2">
    <location>
        <begin position="1332"/>
        <end position="1352"/>
    </location>
</feature>
<feature type="topological domain" description="Cytoplasmic" evidence="10">
    <location>
        <begin position="1353"/>
        <end position="1360"/>
    </location>
</feature>
<feature type="transmembrane region" description="Helical" evidence="2">
    <location>
        <begin position="1361"/>
        <end position="1381"/>
    </location>
</feature>
<feature type="topological domain" description="Extracellular" evidence="10">
    <location>
        <begin position="1382"/>
        <end position="1401"/>
    </location>
</feature>
<feature type="transmembrane region" description="Helical" evidence="2">
    <location>
        <begin position="1402"/>
        <end position="1422"/>
    </location>
</feature>
<feature type="topological domain" description="Cytoplasmic" evidence="10">
    <location>
        <begin position="1423"/>
        <end position="1464"/>
    </location>
</feature>
<feature type="transmembrane region" description="Helical" evidence="2">
    <location>
        <begin position="1465"/>
        <end position="1485"/>
    </location>
</feature>
<feature type="topological domain" description="Extracellular" evidence="10">
    <location>
        <begin position="1486"/>
        <end position="1507"/>
    </location>
</feature>
<feature type="transmembrane region" description="Helical" evidence="2">
    <location>
        <begin position="1508"/>
        <end position="1528"/>
    </location>
</feature>
<feature type="topological domain" description="Cytoplasmic" evidence="10">
    <location>
        <begin position="1529"/>
        <end position="2739"/>
    </location>
</feature>
<feature type="transmembrane region" description="Helical" evidence="2">
    <location>
        <begin position="2740"/>
        <end position="2760"/>
    </location>
</feature>
<feature type="topological domain" description="Extracellular" evidence="10">
    <location>
        <begin position="2761"/>
        <end position="2770"/>
    </location>
</feature>
<feature type="transmembrane region" description="Helical" evidence="2">
    <location>
        <begin position="2771"/>
        <end position="2791"/>
    </location>
</feature>
<feature type="topological domain" description="Cytoplasmic" evidence="10">
    <location>
        <begin position="2792"/>
        <end position="2809"/>
    </location>
</feature>
<feature type="transmembrane region" description="Helical" evidence="2">
    <location>
        <begin position="2810"/>
        <end position="2830"/>
    </location>
</feature>
<feature type="topological domain" description="Extracellular" evidence="10">
    <location>
        <begin position="2831"/>
        <end position="2842"/>
    </location>
</feature>
<feature type="transmembrane region" description="Helical" evidence="2">
    <location>
        <begin position="2843"/>
        <end position="2863"/>
    </location>
</feature>
<feature type="topological domain" description="Cytoplasmic" evidence="10">
    <location>
        <begin position="2864"/>
        <end position="2870"/>
    </location>
</feature>
<feature type="transmembrane region" description="Helical" evidence="2">
    <location>
        <begin position="2871"/>
        <end position="2891"/>
    </location>
</feature>
<feature type="topological domain" description="Extracellular" evidence="10">
    <location>
        <begin position="2892"/>
        <end position="2895"/>
    </location>
</feature>
<feature type="transmembrane region" description="Helical" evidence="2">
    <location>
        <begin position="2896"/>
        <end position="2916"/>
    </location>
</feature>
<feature type="topological domain" description="Cytoplasmic" evidence="10">
    <location>
        <begin position="2917"/>
        <end position="3179"/>
    </location>
</feature>
<feature type="domain" description="Guanylate cyclase 1" evidence="3">
    <location>
        <begin position="1548"/>
        <end position="1700"/>
    </location>
</feature>
<feature type="domain" description="Guanylate cyclase 2" evidence="3">
    <location>
        <begin position="2968"/>
        <end position="3102"/>
    </location>
</feature>
<feature type="region of interest" description="Disordered" evidence="5">
    <location>
        <begin position="2123"/>
        <end position="2153"/>
    </location>
</feature>
<feature type="region of interest" description="Disordered" evidence="5">
    <location>
        <begin position="2355"/>
        <end position="2379"/>
    </location>
</feature>
<feature type="region of interest" description="Disordered" evidence="5">
    <location>
        <begin position="2576"/>
        <end position="2656"/>
    </location>
</feature>
<feature type="compositionally biased region" description="Basic residues" evidence="5">
    <location>
        <begin position="2131"/>
        <end position="2142"/>
    </location>
</feature>
<feature type="compositionally biased region" description="Low complexity" evidence="5">
    <location>
        <begin position="2584"/>
        <end position="2607"/>
    </location>
</feature>
<feature type="compositionally biased region" description="Basic residues" evidence="5">
    <location>
        <begin position="2614"/>
        <end position="2645"/>
    </location>
</feature>
<feature type="binding site" evidence="3">
    <location>
        <position position="2973"/>
    </location>
    <ligand>
        <name>Mg(2+)</name>
        <dbReference type="ChEBI" id="CHEBI:18420"/>
        <label>1</label>
    </ligand>
</feature>
<feature type="binding site" evidence="3">
    <location>
        <position position="2973"/>
    </location>
    <ligand>
        <name>Mg(2+)</name>
        <dbReference type="ChEBI" id="CHEBI:18420"/>
        <label>2</label>
    </ligand>
</feature>
<feature type="binding site" evidence="3">
    <location>
        <position position="2974"/>
    </location>
    <ligand>
        <name>Mg(2+)</name>
        <dbReference type="ChEBI" id="CHEBI:18420"/>
        <label>2</label>
    </ligand>
</feature>
<feature type="binding site" evidence="3">
    <location>
        <position position="3017"/>
    </location>
    <ligand>
        <name>Mg(2+)</name>
        <dbReference type="ChEBI" id="CHEBI:18420"/>
        <label>1</label>
    </ligand>
</feature>
<feature type="binding site" evidence="3">
    <location>
        <position position="3017"/>
    </location>
    <ligand>
        <name>Mg(2+)</name>
        <dbReference type="ChEBI" id="CHEBI:18420"/>
        <label>2</label>
    </ligand>
</feature>
<feature type="glycosylation site" description="N-linked (GlcNAc...) asparagine" evidence="4">
    <location>
        <position position="1383"/>
    </location>
</feature>
<feature type="glycosylation site" description="N-linked (GlcNAc...) asparagine" evidence="4">
    <location>
        <position position="2768"/>
    </location>
</feature>
<feature type="sequence conflict" description="In Ref. 1; CAC05389." evidence="10" ref="1">
    <original>F</original>
    <variation>C</variation>
    <location>
        <position position="2045"/>
    </location>
</feature>
<feature type="sequence conflict" description="In Ref. 1; CAC05389." evidence="10" ref="1">
    <original>KKIEKK</original>
    <variation>NKI</variation>
    <location>
        <begin position="2059"/>
        <end position="2064"/>
    </location>
</feature>
<feature type="sequence conflict" description="In Ref. 1; CAC05389." evidence="10" ref="1">
    <original>N</original>
    <variation>Y</variation>
    <location>
        <position position="2072"/>
    </location>
</feature>
<feature type="sequence conflict" description="In Ref. 1; CAC05389." evidence="10" ref="1">
    <original>K</original>
    <variation>V</variation>
    <location>
        <position position="2140"/>
    </location>
</feature>
<feature type="sequence conflict" description="In Ref. 1; CAC05389." evidence="10" ref="1">
    <original>F</original>
    <variation>V</variation>
    <location>
        <position position="2192"/>
    </location>
</feature>
<feature type="sequence conflict" description="In Ref. 1; CAC05389." evidence="10" ref="1">
    <original>K</original>
    <variation>E</variation>
    <location>
        <position position="2211"/>
    </location>
</feature>
<feature type="sequence conflict" description="In Ref. 1; CAC05389." evidence="10" ref="1">
    <location>
        <begin position="3128"/>
        <end position="3179"/>
    </location>
</feature>
<sequence>MKTQTLSLMNINGKRKFLGTNNKIYRKVIINPTSEDDIQKFCRNYFRIYNFSLYNFIRRLISFDAILVYSLFLTVYIFSEINHGETKKYLFIDTAISLFFNIILLIVIESLFELKKLKDVKNANSQYYLRIVPKMSYFEKVMTKDIKVGNIIRIFQGDEFPADVVILYVKNNANAIVDSFKIDGLFRKSIKYAVDKYKIDKDYLKMLSEINGVIRCELPNKNIFCFQGNFKLDKHPRSLLLNYENFALQSSVLKGAEYIDAVVVYTGADTKKNLNIPQKIEENKTFCIKMNNIVYYLIFMYFVFVVLSIVIKTIFFHKKNSFQNSRDSFLSMLEDFVGLYILVLPIMMYSEKSLIYIIQSLRIENDLRMRNTDSEKPKVFNKNKNDSLGNVDLLATSRNGVLVKRKELLVSCVINNVMYGKKDIICSRTNFKLPTLNILDSERKNVSNLLNLDERIFKDPENIFFPTRDFYSFLKLFENKISSIYNPYSSSLSNLLKEKYKNYVNEEILNKNVKLTSFVKSQLTIGYNQICEDDELSYNCYEIKEDSQKENIQSVKIEDFILGLCGCNRIIIYNEKSLDISMNEYKSDNFMETYSKFETENEEYHENDHDEYHNMEHSDDENINSIEYEDICLYNIIRNTGFSIYCYKNTLFLYNLMKECKVYFLTCYHDFLRSNKFSMCILKCGYSINNEKEGGILYVRGYDFNILPYISKEKNNIKKIKNVIKIYTLNYLKVIILCKKQISNEDIAKYIILKSISKKLSFKFYDLIKLFFLYDLEVIGIIGLKNQLREGVKETFNDVINFDIKSWIFANECSKDTYLTALQCNLIVSSSNLFLINYYNLKNTHEEGANILFHNFISSLYKLKSNSYAVVINDESIKNIMTNVESMKIFLCIAMRATVVLFCKLQNETKGKIIRTLYALTSPKLTVLGIGTTLNDAYLLKYSSISVFLSLNEHVNILYNISDYVLQEFKFISELLILGRLNRFSLCKVFLWIIYLKITVVSFYFFHNFDNYFSGSSASSILYTQTTFALLHYFLIIAFSAYEIDLPYKFVRRLPYIYQLSRRKYFLNNNIILLTIIEAILISLTSYYILRLNVFHLITHREFTFHIFILNVFITTEKILLLSKTWHIYFFIMAVLIIGILLIYVNIFTLVDCIKNGKCEFSLFQMENIYFWTSLFPILYINFIFDKLMKYIKNRIYPDISDYLRKYFLRRICCHNNDKFLSQRKIKGINKFVNFEKNDILLKYIPTPKIYKIKDDPTYYNKSKRSKFLYDTFRKVIDINVKYRNQQLNLEYKTYEKGNKLKLRIIVILLFLIYIIIFSSQTIIDINTKSNIHYITMFYIIYFVLACVLLIYIRIRNKATSTFFFFLSRFLLICGFCIELYDNISNDILNVLITYSFTVSYIFFMSFKILEALLVCISILLLTFGVYYEKNKNMIDICTHFCSNPYLSINNLDHMNISCLCKKQIVIFLISLLSFTLICLSMKYYEIFYLKKKFLFRYKQKVNLAKQIEILHTMLPNFLVEYLLISDPKNDGIMVGKNISGEDRGIISVIFCDIDDFQNMVSTLQPHVLVETLDNLYLYFDKCIKYFNCIKIETVFESYLAASGLSEKKNNALDKIMYDTKCAIKLAIAQLSAKYYISYKVLDTREHFSDNSTSYDKYINKNISLKIGIHTGKAISGVIGSVKPQYALFGDTVNTASRMKSTSLPDHIHVSYDTYKYLKEDNTFIWKERKVFIKGKGKMKTYLLVDILDDVKRKGESLNYYSSSNLLLSQLGSEAVSIYEEREDIKEGSMDIIKESSRDIIKEDSRDIIKEISTNISKSSSRNISKSSSRSISDIKEGQIIDKEDLIFKINRMKNKIDSRYSKRIDKESRDKISDKTNHVLDEVVKHSDIHLLNYEINNKRCKKMKGDTNNENKLIGDIFNMYDKKIKYIYKKNYKSKSMENISFIKHYRNTKYKKSDYLLLDNKGESKKFKRNTSYVLESPLHLIGDIVDNNIKRKKKKKEIKTIVSDDMFTSPVNIKEYNYNEQERKKEIVGNLSYDKTKKIFPFIKFTKEGRIKKKKIEKKEKKEKKENNNNFLYNDDYSSYSSPKYGDNENNFVIKYIRERKDFQKKFDHPNFNFSKFLHNYNPMKNKNKNKKNNKNVRRNEYPNYTSSSKDGVSYNFLSDSLFSSDNEYSSDNEYSSDSEKYYKKRFKKNKKIIKFDDLFTKIYIKKKRLLQMNNYDVKGKGKKLKNKGMERNKTKYKNVNEITKMKYFVNNENRDHEVNKEDISKSMQKYFLHISKHKKEQIEDKKKTHKYFHKNVECVYPYAGNNINHNFSRNEKRKYSINLYDHLDEQEKIKGKKKYFNKDKELIGSINKQTERKPKKKNKKNIENKKDKKKIRMITNKTKEKHSNSIISVEEQNMNHNNSLKKKEVNFTGKNEEYLNRANTNCSLGIKEMEEDVYEFHSNNIYYNNQTSYSDDINNTTKLKGMGNNTNDISKNKGKNKLGKKISFFSMNNKYHESEIMNEEDNKNMLNLTQSQIINKDKYNYFTHCPSLKKKKSVFTKINNLFKNYFKSIDVHEKFGFSKKFKFHSKDSDDIKGNNNKISKNRYNNNNNNNNSNYSNIDSGKYSHNNKKNHHHNNNKYHHHNNNKYHHHNNNKYHHQNNNYEKHHHSNNSRVMLSKGEKTEKNENVDYAYQFDNYDKKLLKKLTSNLQLNKKNVKNFNMFYYKFNDEELEEEYTRNYYREIINIDLTKKLIIIFIFTEIFLSLCNIIELSFYEKKLRYNDSIVIIWLIRSIYLFIITYIWIILKTKLKEYKNNSSKMMWTIFILNIFLCSWGIILIDLSCIHYSMLLGNKNERALFFMKDASELIICIQLIFIKNMLFKHKFFFFVFFYIFLIYSFSKLFSIHTCQTHICCSIILFISINILYFWYSEYLDRIQFLVKRKRNRMEKISQDFLTKILPRQVLEEYQNDNLQLTYKHEKIAFLFADIVGFTKWSKTVSPKEVLKLLQKLISKIDKDTIKLGLYKLFTIGDAYVATSQPNSSITDESEALEGILNILKLAKLILHNINTIKIQFNKHDFNMRIGLHYGSCVGGIIGSVRIRYDMWGLDVLIANKIESNGIPGEIICSEQFRHFFIQNEPQAKLNFWYYKSISINDQDIKLYVIEDKNYEEDYDPKVIDYTTLLKLRQKKGLRS</sequence>
<reference evidence="14" key="1">
    <citation type="journal article" date="2000" name="J. Biol. Chem.">
        <title>Guanylyl cyclase activity associated with putative bifunctional integral membrane proteins in Plasmodium falciparum.</title>
        <authorList>
            <person name="Carucci D.J."/>
            <person name="Witney A.A."/>
            <person name="Muhia D.K."/>
            <person name="Warhurst D.C."/>
            <person name="Schaap P."/>
            <person name="Meima M."/>
            <person name="Li J.L."/>
            <person name="Taylor M.C."/>
            <person name="Kelly J.M."/>
            <person name="Baker D.A."/>
        </authorList>
    </citation>
    <scope>NUCLEOTIDE SEQUENCE [GENOMIC DNA]</scope>
    <scope>FUNCTION</scope>
    <scope>CATALYTIC ACTIVITY</scope>
    <scope>COFACTOR</scope>
    <scope>DEVELOPMENTAL STAGE</scope>
</reference>
<reference evidence="16" key="2">
    <citation type="journal article" date="2002" name="Nature">
        <title>Genome sequence of the human malaria parasite Plasmodium falciparum.</title>
        <authorList>
            <person name="Gardner M.J."/>
            <person name="Hall N."/>
            <person name="Fung E."/>
            <person name="White O."/>
            <person name="Berriman M."/>
            <person name="Hyman R.W."/>
            <person name="Carlton J.M."/>
            <person name="Pain A."/>
            <person name="Nelson K.E."/>
            <person name="Bowman S."/>
            <person name="Paulsen I.T."/>
            <person name="James K.D."/>
            <person name="Eisen J.A."/>
            <person name="Rutherford K.M."/>
            <person name="Salzberg S.L."/>
            <person name="Craig A."/>
            <person name="Kyes S."/>
            <person name="Chan M.-S."/>
            <person name="Nene V."/>
            <person name="Shallom S.J."/>
            <person name="Suh B."/>
            <person name="Peterson J."/>
            <person name="Angiuoli S."/>
            <person name="Pertea M."/>
            <person name="Allen J."/>
            <person name="Selengut J."/>
            <person name="Haft D."/>
            <person name="Mather M.W."/>
            <person name="Vaidya A.B."/>
            <person name="Martin D.M.A."/>
            <person name="Fairlamb A.H."/>
            <person name="Fraunholz M.J."/>
            <person name="Roos D.S."/>
            <person name="Ralph S.A."/>
            <person name="McFadden G.I."/>
            <person name="Cummings L.M."/>
            <person name="Subramanian G.M."/>
            <person name="Mungall C."/>
            <person name="Venter J.C."/>
            <person name="Carucci D.J."/>
            <person name="Hoffman S.L."/>
            <person name="Newbold C."/>
            <person name="Davis R.W."/>
            <person name="Fraser C.M."/>
            <person name="Barrell B.G."/>
        </authorList>
    </citation>
    <scope>NUCLEOTIDE SEQUENCE [LARGE SCALE GENOMIC DNA]</scope>
    <source>
        <strain evidence="16">3D7</strain>
    </source>
</reference>
<reference evidence="16" key="3">
    <citation type="journal article" date="2002" name="Nature">
        <title>Sequence of Plasmodium falciparum chromosomes 1, 3-9 and 13.</title>
        <authorList>
            <person name="Hall N."/>
            <person name="Pain A."/>
            <person name="Berriman M."/>
            <person name="Churcher C.M."/>
            <person name="Harris B."/>
            <person name="Harris D."/>
            <person name="Mungall K.L."/>
            <person name="Bowman S."/>
            <person name="Atkin R."/>
            <person name="Baker S."/>
            <person name="Barron A."/>
            <person name="Brooks K."/>
            <person name="Buckee C.O."/>
            <person name="Burrows C."/>
            <person name="Cherevach I."/>
            <person name="Chillingworth C."/>
            <person name="Chillingworth T."/>
            <person name="Christodoulou Z."/>
            <person name="Clark L."/>
            <person name="Clark R."/>
            <person name="Corton C."/>
            <person name="Cronin A."/>
            <person name="Davies R.M."/>
            <person name="Davis P."/>
            <person name="Dear P."/>
            <person name="Dearden F."/>
            <person name="Doggett J."/>
            <person name="Feltwell T."/>
            <person name="Goble A."/>
            <person name="Goodhead I."/>
            <person name="Gwilliam R."/>
            <person name="Hamlin N."/>
            <person name="Hance Z."/>
            <person name="Harper D."/>
            <person name="Hauser H."/>
            <person name="Hornsby T."/>
            <person name="Holroyd S."/>
            <person name="Horrocks P."/>
            <person name="Humphray S."/>
            <person name="Jagels K."/>
            <person name="James K.D."/>
            <person name="Johnson D."/>
            <person name="Kerhornou A."/>
            <person name="Knights A."/>
            <person name="Konfortov B."/>
            <person name="Kyes S."/>
            <person name="Larke N."/>
            <person name="Lawson D."/>
            <person name="Lennard N."/>
            <person name="Line A."/>
            <person name="Maddison M."/>
            <person name="Mclean J."/>
            <person name="Mooney P."/>
            <person name="Moule S."/>
            <person name="Murphy L."/>
            <person name="Oliver K."/>
            <person name="Ormond D."/>
            <person name="Price C."/>
            <person name="Quail M.A."/>
            <person name="Rabbinowitsch E."/>
            <person name="Rajandream M.A."/>
            <person name="Rutter S."/>
            <person name="Rutherford K.M."/>
            <person name="Sanders M."/>
            <person name="Simmonds M."/>
            <person name="Seeger K."/>
            <person name="Sharp S."/>
            <person name="Smith R."/>
            <person name="Squares R."/>
            <person name="Squares S."/>
            <person name="Stevens K."/>
            <person name="Taylor K."/>
            <person name="Tivey A."/>
            <person name="Unwin L."/>
            <person name="Whitehead S."/>
            <person name="Woodward J.R."/>
            <person name="Sulston J.E."/>
            <person name="Craig A."/>
            <person name="Newbold C."/>
            <person name="Barrell B.G."/>
        </authorList>
    </citation>
    <scope>NUCLEOTIDE SEQUENCE [LARGE SCALE GENOMIC DNA]</scope>
    <source>
        <strain evidence="16">3D7</strain>
    </source>
</reference>
<reference evidence="10" key="4">
    <citation type="journal article" date="2001" name="Mol. Microbiol.">
        <title>The gametocyte-activating factor xanthurenic acid stimulates an increase in membrane-associated guanylyl cyclase activity in the human malaria parasite Plasmodium falciparum.</title>
        <authorList>
            <person name="Muhia D.K."/>
            <person name="Swales C.A."/>
            <person name="Deng W."/>
            <person name="Kelly J.M."/>
            <person name="Baker D.A."/>
        </authorList>
    </citation>
    <scope>FUNCTION</scope>
    <scope>CATALYTIC ACTIVITY</scope>
    <scope>COFACTOR</scope>
    <scope>ACTIVITY REGULATION</scope>
</reference>
<reference evidence="10" key="5">
    <citation type="journal article" date="2008" name="Mol. Microbiol.">
        <title>Disruption of a Plasmodium falciparum cyclic nucleotide phosphodiesterase gene causes aberrant gametogenesis.</title>
        <authorList>
            <person name="Taylor C.J."/>
            <person name="McRobert L."/>
            <person name="Baker D.A."/>
        </authorList>
    </citation>
    <scope>FUNCTION</scope>
    <scope>CATALYTIC ACTIVITY</scope>
    <scope>DOMAIN</scope>
</reference>
<protein>
    <recommendedName>
        <fullName evidence="10">Guanylate cyclase beta</fullName>
        <shortName evidence="9">PfGCbeta</shortName>
        <ecNumber evidence="6 7 13">4.6.1.2</ecNumber>
    </recommendedName>
    <alternativeName>
        <fullName evidence="9">Guanylyl cyclase beta</fullName>
    </alternativeName>
</protein>
<organism evidence="16">
    <name type="scientific">Plasmodium falciparum (isolate 3D7)</name>
    <dbReference type="NCBI Taxonomy" id="36329"/>
    <lineage>
        <taxon>Eukaryota</taxon>
        <taxon>Sar</taxon>
        <taxon>Alveolata</taxon>
        <taxon>Apicomplexa</taxon>
        <taxon>Aconoidasida</taxon>
        <taxon>Haemosporida</taxon>
        <taxon>Plasmodiidae</taxon>
        <taxon>Plasmodium</taxon>
        <taxon>Plasmodium (Laverania)</taxon>
    </lineage>
</organism>
<name>GCYB_PLAF7</name>
<keyword id="KW-0141">cGMP biosynthesis</keyword>
<keyword id="KW-0325">Glycoprotein</keyword>
<keyword id="KW-0456">Lyase</keyword>
<keyword id="KW-0460">Magnesium</keyword>
<keyword id="KW-0472">Membrane</keyword>
<keyword id="KW-0479">Metal-binding</keyword>
<keyword id="KW-1185">Reference proteome</keyword>
<keyword id="KW-0812">Transmembrane</keyword>
<keyword id="KW-1133">Transmembrane helix</keyword>
<gene>
    <name evidence="9" type="primary">GCbeta</name>
    <name evidence="15" type="ORF">PF3D7_1360500</name>
</gene>
<dbReference type="EC" id="4.6.1.2" evidence="6 7 13"/>
<dbReference type="EMBL" id="AJ249165">
    <property type="protein sequence ID" value="CAC05389.1"/>
    <property type="molecule type" value="Genomic_DNA"/>
</dbReference>
<dbReference type="EMBL" id="AL844509">
    <property type="protein sequence ID" value="CAD52725.2"/>
    <property type="molecule type" value="Genomic_DNA"/>
</dbReference>
<dbReference type="RefSeq" id="XP_001350316.2">
    <property type="nucleotide sequence ID" value="XM_001350280.2"/>
</dbReference>
<dbReference type="FunCoup" id="Q8IDA0">
    <property type="interactions" value="30"/>
</dbReference>
<dbReference type="STRING" id="36329.Q8IDA0"/>
<dbReference type="GlyCosmos" id="Q8IDA0">
    <property type="glycosylation" value="2 sites, No reported glycans"/>
</dbReference>
<dbReference type="PaxDb" id="5833-MAL13P1.301"/>
<dbReference type="EnsemblProtists" id="CAD52725">
    <property type="protein sequence ID" value="CAD52725"/>
    <property type="gene ID" value="PF3D7_1360500"/>
</dbReference>
<dbReference type="GeneID" id="813865"/>
<dbReference type="KEGG" id="pfa:PF3D7_1360500"/>
<dbReference type="VEuPathDB" id="PlasmoDB:PF3D7_1360500"/>
<dbReference type="VEuPathDB" id="PlasmoDB:Pf7G8_130065100"/>
<dbReference type="VEuPathDB" id="PlasmoDB:PfCD01_130066200"/>
<dbReference type="VEuPathDB" id="PlasmoDB:PfDd2_130066400"/>
<dbReference type="VEuPathDB" id="PlasmoDB:PfGA01_130066700"/>
<dbReference type="VEuPathDB" id="PlasmoDB:PfGB4_130066500"/>
<dbReference type="VEuPathDB" id="PlasmoDB:PfGN01_130067300"/>
<dbReference type="VEuPathDB" id="PlasmoDB:PfHB3_130067000"/>
<dbReference type="VEuPathDB" id="PlasmoDB:PfIT_130065900"/>
<dbReference type="VEuPathDB" id="PlasmoDB:PfKE01_130066200"/>
<dbReference type="VEuPathDB" id="PlasmoDB:PfKH01_130064600"/>
<dbReference type="VEuPathDB" id="PlasmoDB:PfKH02_130063500"/>
<dbReference type="VEuPathDB" id="PlasmoDB:PfML01_110043200"/>
<dbReference type="VEuPathDB" id="PlasmoDB:PfSD01_130067300"/>
<dbReference type="VEuPathDB" id="PlasmoDB:PfSN01_130063600"/>
<dbReference type="VEuPathDB" id="PlasmoDB:PfTG01_130066300"/>
<dbReference type="HOGENOM" id="CLU_225548_0_0_1"/>
<dbReference type="InParanoid" id="Q8IDA0"/>
<dbReference type="OMA" id="NNNKYHH"/>
<dbReference type="OrthoDB" id="6127067at2759"/>
<dbReference type="PhylomeDB" id="Q8IDA0"/>
<dbReference type="Proteomes" id="UP000001450">
    <property type="component" value="Chromosome 13"/>
</dbReference>
<dbReference type="GO" id="GO:0016020">
    <property type="term" value="C:membrane"/>
    <property type="evidence" value="ECO:0007669"/>
    <property type="project" value="UniProtKB-SubCell"/>
</dbReference>
<dbReference type="GO" id="GO:0004383">
    <property type="term" value="F:guanylate cyclase activity"/>
    <property type="evidence" value="ECO:0000314"/>
    <property type="project" value="UniProtKB"/>
</dbReference>
<dbReference type="GO" id="GO:0046872">
    <property type="term" value="F:metal ion binding"/>
    <property type="evidence" value="ECO:0007669"/>
    <property type="project" value="UniProtKB-KW"/>
</dbReference>
<dbReference type="GO" id="GO:0006182">
    <property type="term" value="P:cGMP biosynthetic process"/>
    <property type="evidence" value="ECO:0000314"/>
    <property type="project" value="UniProtKB"/>
</dbReference>
<dbReference type="GO" id="GO:0035556">
    <property type="term" value="P:intracellular signal transduction"/>
    <property type="evidence" value="ECO:0007669"/>
    <property type="project" value="InterPro"/>
</dbReference>
<dbReference type="CDD" id="cd07302">
    <property type="entry name" value="CHD"/>
    <property type="match status" value="2"/>
</dbReference>
<dbReference type="Gene3D" id="2.70.150.10">
    <property type="entry name" value="Calcium-transporting ATPase, cytoplasmic transduction domain A"/>
    <property type="match status" value="1"/>
</dbReference>
<dbReference type="Gene3D" id="3.40.50.1000">
    <property type="entry name" value="HAD superfamily/HAD-like"/>
    <property type="match status" value="1"/>
</dbReference>
<dbReference type="Gene3D" id="3.30.70.1230">
    <property type="entry name" value="Nucleotide cyclase"/>
    <property type="match status" value="2"/>
</dbReference>
<dbReference type="InterPro" id="IPR001054">
    <property type="entry name" value="A/G_cyclase"/>
</dbReference>
<dbReference type="InterPro" id="IPR023298">
    <property type="entry name" value="ATPase_P-typ_TM_dom_sf"/>
</dbReference>
<dbReference type="InterPro" id="IPR008250">
    <property type="entry name" value="ATPase_P-typ_transduc_dom_A_sf"/>
</dbReference>
<dbReference type="InterPro" id="IPR036412">
    <property type="entry name" value="HAD-like_sf"/>
</dbReference>
<dbReference type="InterPro" id="IPR023214">
    <property type="entry name" value="HAD_sf"/>
</dbReference>
<dbReference type="InterPro" id="IPR029787">
    <property type="entry name" value="Nucleotide_cyclase"/>
</dbReference>
<dbReference type="InterPro" id="IPR032630">
    <property type="entry name" value="P_typ_ATPase_c"/>
</dbReference>
<dbReference type="PANTHER" id="PTHR24092:SF175">
    <property type="entry name" value="PHOSPHOLIPID-TRANSPORTING ATPASE"/>
    <property type="match status" value="1"/>
</dbReference>
<dbReference type="PANTHER" id="PTHR24092">
    <property type="entry name" value="PROBABLE PHOSPHOLIPID-TRANSPORTING ATPASE"/>
    <property type="match status" value="1"/>
</dbReference>
<dbReference type="Pfam" id="PF00211">
    <property type="entry name" value="Guanylate_cyc"/>
    <property type="match status" value="2"/>
</dbReference>
<dbReference type="Pfam" id="PF16212">
    <property type="entry name" value="PhoLip_ATPase_C"/>
    <property type="match status" value="1"/>
</dbReference>
<dbReference type="SMART" id="SM00044">
    <property type="entry name" value="CYCc"/>
    <property type="match status" value="2"/>
</dbReference>
<dbReference type="SUPFAM" id="SSF81653">
    <property type="entry name" value="Calcium ATPase, transduction domain A"/>
    <property type="match status" value="1"/>
</dbReference>
<dbReference type="SUPFAM" id="SSF81665">
    <property type="entry name" value="Calcium ATPase, transmembrane domain M"/>
    <property type="match status" value="1"/>
</dbReference>
<dbReference type="SUPFAM" id="SSF56784">
    <property type="entry name" value="HAD-like"/>
    <property type="match status" value="1"/>
</dbReference>
<dbReference type="SUPFAM" id="SSF55073">
    <property type="entry name" value="Nucleotide cyclase"/>
    <property type="match status" value="2"/>
</dbReference>
<dbReference type="PROSITE" id="PS50125">
    <property type="entry name" value="GUANYLATE_CYCLASE_2"/>
    <property type="match status" value="2"/>
</dbReference>
<accession>Q8IDA0</accession>
<accession>Q9GVB8</accession>